<evidence type="ECO:0000255" key="1">
    <source>
        <dbReference type="HAMAP-Rule" id="MF_00480"/>
    </source>
</evidence>
<evidence type="ECO:0000305" key="2"/>
<comment type="function">
    <text evidence="1">One of the primary rRNA binding proteins, it binds directly to 16S rRNA where it nucleates assembly of the head domain of the 30S subunit. Is located at the subunit interface close to the decoding center, probably blocks exit of the E-site tRNA.</text>
</comment>
<comment type="subunit">
    <text evidence="1">Part of the 30S ribosomal subunit. Contacts proteins S9 and S11.</text>
</comment>
<comment type="similarity">
    <text evidence="1">Belongs to the universal ribosomal protein uS7 family.</text>
</comment>
<keyword id="KW-0687">Ribonucleoprotein</keyword>
<keyword id="KW-0689">Ribosomal protein</keyword>
<keyword id="KW-0694">RNA-binding</keyword>
<keyword id="KW-0699">rRNA-binding</keyword>
<keyword id="KW-0820">tRNA-binding</keyword>
<organism>
    <name type="scientific">Brucella abortus biovar 1 (strain 9-941)</name>
    <dbReference type="NCBI Taxonomy" id="262698"/>
    <lineage>
        <taxon>Bacteria</taxon>
        <taxon>Pseudomonadati</taxon>
        <taxon>Pseudomonadota</taxon>
        <taxon>Alphaproteobacteria</taxon>
        <taxon>Hyphomicrobiales</taxon>
        <taxon>Brucellaceae</taxon>
        <taxon>Brucella/Ochrobactrum group</taxon>
        <taxon>Brucella</taxon>
    </lineage>
</organism>
<protein>
    <recommendedName>
        <fullName evidence="1">Small ribosomal subunit protein uS7</fullName>
    </recommendedName>
    <alternativeName>
        <fullName evidence="2">30S ribosomal protein S7</fullName>
    </alternativeName>
</protein>
<dbReference type="EMBL" id="AE017223">
    <property type="protein sequence ID" value="AAX74580.1"/>
    <property type="molecule type" value="Genomic_DNA"/>
</dbReference>
<dbReference type="RefSeq" id="WP_002964365.1">
    <property type="nucleotide sequence ID" value="NC_006932.1"/>
</dbReference>
<dbReference type="SMR" id="Q57CQ4"/>
<dbReference type="EnsemblBacteria" id="AAX74580">
    <property type="protein sequence ID" value="AAX74580"/>
    <property type="gene ID" value="BruAb1_1242"/>
</dbReference>
<dbReference type="GeneID" id="97533521"/>
<dbReference type="KEGG" id="bmb:BruAb1_1242"/>
<dbReference type="HOGENOM" id="CLU_072226_1_1_5"/>
<dbReference type="Proteomes" id="UP000000540">
    <property type="component" value="Chromosome I"/>
</dbReference>
<dbReference type="GO" id="GO:0015935">
    <property type="term" value="C:small ribosomal subunit"/>
    <property type="evidence" value="ECO:0007669"/>
    <property type="project" value="InterPro"/>
</dbReference>
<dbReference type="GO" id="GO:0019843">
    <property type="term" value="F:rRNA binding"/>
    <property type="evidence" value="ECO:0007669"/>
    <property type="project" value="UniProtKB-UniRule"/>
</dbReference>
<dbReference type="GO" id="GO:0003735">
    <property type="term" value="F:structural constituent of ribosome"/>
    <property type="evidence" value="ECO:0007669"/>
    <property type="project" value="InterPro"/>
</dbReference>
<dbReference type="GO" id="GO:0000049">
    <property type="term" value="F:tRNA binding"/>
    <property type="evidence" value="ECO:0007669"/>
    <property type="project" value="UniProtKB-UniRule"/>
</dbReference>
<dbReference type="GO" id="GO:0006412">
    <property type="term" value="P:translation"/>
    <property type="evidence" value="ECO:0007669"/>
    <property type="project" value="UniProtKB-UniRule"/>
</dbReference>
<dbReference type="CDD" id="cd14869">
    <property type="entry name" value="uS7_Bacteria"/>
    <property type="match status" value="1"/>
</dbReference>
<dbReference type="FunFam" id="1.10.455.10:FF:000001">
    <property type="entry name" value="30S ribosomal protein S7"/>
    <property type="match status" value="1"/>
</dbReference>
<dbReference type="Gene3D" id="1.10.455.10">
    <property type="entry name" value="Ribosomal protein S7 domain"/>
    <property type="match status" value="1"/>
</dbReference>
<dbReference type="HAMAP" id="MF_00480_B">
    <property type="entry name" value="Ribosomal_uS7_B"/>
    <property type="match status" value="1"/>
</dbReference>
<dbReference type="InterPro" id="IPR000235">
    <property type="entry name" value="Ribosomal_uS7"/>
</dbReference>
<dbReference type="InterPro" id="IPR005717">
    <property type="entry name" value="Ribosomal_uS7_bac/org-type"/>
</dbReference>
<dbReference type="InterPro" id="IPR020606">
    <property type="entry name" value="Ribosomal_uS7_CS"/>
</dbReference>
<dbReference type="InterPro" id="IPR023798">
    <property type="entry name" value="Ribosomal_uS7_dom"/>
</dbReference>
<dbReference type="InterPro" id="IPR036823">
    <property type="entry name" value="Ribosomal_uS7_dom_sf"/>
</dbReference>
<dbReference type="NCBIfam" id="TIGR01029">
    <property type="entry name" value="rpsG_bact"/>
    <property type="match status" value="1"/>
</dbReference>
<dbReference type="PANTHER" id="PTHR11205">
    <property type="entry name" value="RIBOSOMAL PROTEIN S7"/>
    <property type="match status" value="1"/>
</dbReference>
<dbReference type="Pfam" id="PF00177">
    <property type="entry name" value="Ribosomal_S7"/>
    <property type="match status" value="1"/>
</dbReference>
<dbReference type="PIRSF" id="PIRSF002122">
    <property type="entry name" value="RPS7p_RPS7a_RPS5e_RPS7o"/>
    <property type="match status" value="1"/>
</dbReference>
<dbReference type="SUPFAM" id="SSF47973">
    <property type="entry name" value="Ribosomal protein S7"/>
    <property type="match status" value="1"/>
</dbReference>
<dbReference type="PROSITE" id="PS00052">
    <property type="entry name" value="RIBOSOMAL_S7"/>
    <property type="match status" value="1"/>
</dbReference>
<sequence length="156" mass="17625">MSRRHKAEKREINPDPKFGDLVITKFMNAVMLHGKKSVAESIVYGALDAIEAKAKSEPVALFHQALDNVAPHIEVRSRRVGGATYQVPVDVRPERRQALAIRWLINAARGRNETTMVDRLSGELLDAANNRGSAVKKREDTHRMAEANRAFSHYRW</sequence>
<proteinExistence type="inferred from homology"/>
<feature type="chain" id="PRO_0000226484" description="Small ribosomal subunit protein uS7">
    <location>
        <begin position="1"/>
        <end position="156"/>
    </location>
</feature>
<name>RS7_BRUAB</name>
<reference key="1">
    <citation type="journal article" date="2005" name="J. Bacteriol.">
        <title>Completion of the genome sequence of Brucella abortus and comparison to the highly similar genomes of Brucella melitensis and Brucella suis.</title>
        <authorList>
            <person name="Halling S.M."/>
            <person name="Peterson-Burch B.D."/>
            <person name="Bricker B.J."/>
            <person name="Zuerner R.L."/>
            <person name="Qing Z."/>
            <person name="Li L.-L."/>
            <person name="Kapur V."/>
            <person name="Alt D.P."/>
            <person name="Olsen S.C."/>
        </authorList>
    </citation>
    <scope>NUCLEOTIDE SEQUENCE [LARGE SCALE GENOMIC DNA]</scope>
    <source>
        <strain>9-941</strain>
    </source>
</reference>
<accession>Q57CQ4</accession>
<gene>
    <name evidence="1" type="primary">rpsG</name>
    <name type="ordered locus">BruAb1_1242</name>
</gene>